<reference key="1">
    <citation type="journal article" date="2009" name="J. Bacteriol.">
        <title>Genome sequences of three Agrobacterium biovars help elucidate the evolution of multichromosome genomes in bacteria.</title>
        <authorList>
            <person name="Slater S.C."/>
            <person name="Goldman B.S."/>
            <person name="Goodner B."/>
            <person name="Setubal J.C."/>
            <person name="Farrand S.K."/>
            <person name="Nester E.W."/>
            <person name="Burr T.J."/>
            <person name="Banta L."/>
            <person name="Dickerman A.W."/>
            <person name="Paulsen I."/>
            <person name="Otten L."/>
            <person name="Suen G."/>
            <person name="Welch R."/>
            <person name="Almeida N.F."/>
            <person name="Arnold F."/>
            <person name="Burton O.T."/>
            <person name="Du Z."/>
            <person name="Ewing A."/>
            <person name="Godsy E."/>
            <person name="Heisel S."/>
            <person name="Houmiel K.L."/>
            <person name="Jhaveri J."/>
            <person name="Lu J."/>
            <person name="Miller N.M."/>
            <person name="Norton S."/>
            <person name="Chen Q."/>
            <person name="Phoolcharoen W."/>
            <person name="Ohlin V."/>
            <person name="Ondrusek D."/>
            <person name="Pride N."/>
            <person name="Stricklin S.L."/>
            <person name="Sun J."/>
            <person name="Wheeler C."/>
            <person name="Wilson L."/>
            <person name="Zhu H."/>
            <person name="Wood D.W."/>
        </authorList>
    </citation>
    <scope>NUCLEOTIDE SEQUENCE [LARGE SCALE GENOMIC DNA]</scope>
    <source>
        <strain>ATCC BAA-846 / DSM 112012 / S4</strain>
    </source>
</reference>
<comment type="catalytic activity">
    <reaction evidence="1">
        <text>N-(5-phospho-beta-D-ribosyl)anthranilate = 1-(2-carboxyphenylamino)-1-deoxy-D-ribulose 5-phosphate</text>
        <dbReference type="Rhea" id="RHEA:21540"/>
        <dbReference type="ChEBI" id="CHEBI:18277"/>
        <dbReference type="ChEBI" id="CHEBI:58613"/>
        <dbReference type="EC" id="5.3.1.24"/>
    </reaction>
</comment>
<comment type="pathway">
    <text evidence="1">Amino-acid biosynthesis; L-tryptophan biosynthesis; L-tryptophan from chorismate: step 3/5.</text>
</comment>
<comment type="similarity">
    <text evidence="1">Belongs to the TrpF family.</text>
</comment>
<evidence type="ECO:0000255" key="1">
    <source>
        <dbReference type="HAMAP-Rule" id="MF_00135"/>
    </source>
</evidence>
<feature type="chain" id="PRO_1000197072" description="N-(5'-phosphoribosyl)anthranilate isomerase">
    <location>
        <begin position="1"/>
        <end position="224"/>
    </location>
</feature>
<keyword id="KW-0028">Amino-acid biosynthesis</keyword>
<keyword id="KW-0057">Aromatic amino acid biosynthesis</keyword>
<keyword id="KW-0413">Isomerase</keyword>
<keyword id="KW-1185">Reference proteome</keyword>
<keyword id="KW-0822">Tryptophan biosynthesis</keyword>
<proteinExistence type="inferred from homology"/>
<dbReference type="EC" id="5.3.1.24" evidence="1"/>
<dbReference type="EMBL" id="CP000633">
    <property type="protein sequence ID" value="ACM34985.1"/>
    <property type="molecule type" value="Genomic_DNA"/>
</dbReference>
<dbReference type="RefSeq" id="WP_012654515.1">
    <property type="nucleotide sequence ID" value="NC_011989.1"/>
</dbReference>
<dbReference type="SMR" id="B9JXV5"/>
<dbReference type="STRING" id="311402.Avi_0019"/>
<dbReference type="KEGG" id="avi:Avi_0019"/>
<dbReference type="eggNOG" id="COG0135">
    <property type="taxonomic scope" value="Bacteria"/>
</dbReference>
<dbReference type="HOGENOM" id="CLU_076364_1_1_5"/>
<dbReference type="UniPathway" id="UPA00035">
    <property type="reaction ID" value="UER00042"/>
</dbReference>
<dbReference type="Proteomes" id="UP000001596">
    <property type="component" value="Chromosome 1"/>
</dbReference>
<dbReference type="GO" id="GO:0004640">
    <property type="term" value="F:phosphoribosylanthranilate isomerase activity"/>
    <property type="evidence" value="ECO:0007669"/>
    <property type="project" value="UniProtKB-UniRule"/>
</dbReference>
<dbReference type="GO" id="GO:0000162">
    <property type="term" value="P:L-tryptophan biosynthetic process"/>
    <property type="evidence" value="ECO:0007669"/>
    <property type="project" value="UniProtKB-UniRule"/>
</dbReference>
<dbReference type="CDD" id="cd00405">
    <property type="entry name" value="PRAI"/>
    <property type="match status" value="1"/>
</dbReference>
<dbReference type="Gene3D" id="3.20.20.70">
    <property type="entry name" value="Aldolase class I"/>
    <property type="match status" value="1"/>
</dbReference>
<dbReference type="HAMAP" id="MF_00135">
    <property type="entry name" value="PRAI"/>
    <property type="match status" value="1"/>
</dbReference>
<dbReference type="InterPro" id="IPR013785">
    <property type="entry name" value="Aldolase_TIM"/>
</dbReference>
<dbReference type="InterPro" id="IPR001240">
    <property type="entry name" value="PRAI_dom"/>
</dbReference>
<dbReference type="InterPro" id="IPR011060">
    <property type="entry name" value="RibuloseP-bd_barrel"/>
</dbReference>
<dbReference type="InterPro" id="IPR044643">
    <property type="entry name" value="TrpF_fam"/>
</dbReference>
<dbReference type="NCBIfam" id="NF002295">
    <property type="entry name" value="PRK01222.1-1"/>
    <property type="match status" value="1"/>
</dbReference>
<dbReference type="PANTHER" id="PTHR42894">
    <property type="entry name" value="N-(5'-PHOSPHORIBOSYL)ANTHRANILATE ISOMERASE"/>
    <property type="match status" value="1"/>
</dbReference>
<dbReference type="PANTHER" id="PTHR42894:SF1">
    <property type="entry name" value="N-(5'-PHOSPHORIBOSYL)ANTHRANILATE ISOMERASE"/>
    <property type="match status" value="1"/>
</dbReference>
<dbReference type="Pfam" id="PF00697">
    <property type="entry name" value="PRAI"/>
    <property type="match status" value="1"/>
</dbReference>
<dbReference type="SUPFAM" id="SSF51366">
    <property type="entry name" value="Ribulose-phoshate binding barrel"/>
    <property type="match status" value="1"/>
</dbReference>
<organism>
    <name type="scientific">Allorhizobium ampelinum (strain ATCC BAA-846 / DSM 112012 / S4)</name>
    <name type="common">Agrobacterium vitis (strain S4)</name>
    <dbReference type="NCBI Taxonomy" id="311402"/>
    <lineage>
        <taxon>Bacteria</taxon>
        <taxon>Pseudomonadati</taxon>
        <taxon>Pseudomonadota</taxon>
        <taxon>Alphaproteobacteria</taxon>
        <taxon>Hyphomicrobiales</taxon>
        <taxon>Rhizobiaceae</taxon>
        <taxon>Rhizobium/Agrobacterium group</taxon>
        <taxon>Allorhizobium</taxon>
        <taxon>Allorhizobium ampelinum</taxon>
    </lineage>
</organism>
<accession>B9JXV5</accession>
<sequence length="224" mass="24082">MKPDVKICGLKTEEAVEKAVSLGATHVGFIFFEKSPRHIEPDIAGRIAEKARGRAKIVAVTVDADTDDLDDIVYLLKPDILQLHGHESPQQVLTIKALYGLPVMKVFSIREPADLLQIDAYIGIADRFLLDAKAPEGSDLPGGNGVTFDWRLLRDLDAEVDYMLSGGLNKDNVGQALAETAARGLDVSSGVESAPGVKDLERMDQFFAAVRLATATAPVSGSVQ</sequence>
<name>TRPF_ALLAM</name>
<gene>
    <name evidence="1" type="primary">trpF</name>
    <name type="ordered locus">Avi_0019</name>
</gene>
<protein>
    <recommendedName>
        <fullName evidence="1">N-(5'-phosphoribosyl)anthranilate isomerase</fullName>
        <shortName evidence="1">PRAI</shortName>
        <ecNumber evidence="1">5.3.1.24</ecNumber>
    </recommendedName>
</protein>